<name>TRHO_TERTT</name>
<accession>C5BMM7</accession>
<sequence length="321" mass="36079">MSDYLVAALYKFVSLPNYESLREPLIDFCQSREIKGTLLLAAEGINGTVAGTPEAIQALLEELRRQPGLDALEHKESVATEQPFYRLKIKLKKEIVTMGVEGIDPNLVVGTYVAPAEWNALISDPDVTVIDTRNDYEYEIGTFRGAVNPNTQSFRQLPQYVAENLDPNKHKKVAMFCTGGIRCEKSTALMKQMGFEEVYHLQGGILKYLEEVPEGNSLWDGECFVFDNRVSVKHGLEEGSYELCHGCRFPINETDKQSDKYIKGVACPRCYDEQTPEQRSRFLERQKQMELASRKGELHIGDRADIAKSRTTQGAPSADGE</sequence>
<reference key="1">
    <citation type="journal article" date="2009" name="PLoS ONE">
        <title>The complete genome of Teredinibacter turnerae T7901: an intracellular endosymbiont of marine wood-boring bivalves (shipworms).</title>
        <authorList>
            <person name="Yang J.C."/>
            <person name="Madupu R."/>
            <person name="Durkin A.S."/>
            <person name="Ekborg N.A."/>
            <person name="Pedamallu C.S."/>
            <person name="Hostetler J.B."/>
            <person name="Radune D."/>
            <person name="Toms B.S."/>
            <person name="Henrissat B."/>
            <person name="Coutinho P.M."/>
            <person name="Schwarz S."/>
            <person name="Field L."/>
            <person name="Trindade-Silva A.E."/>
            <person name="Soares C.A.G."/>
            <person name="Elshahawi S."/>
            <person name="Hanora A."/>
            <person name="Schmidt E.W."/>
            <person name="Haygood M.G."/>
            <person name="Posfai J."/>
            <person name="Benner J."/>
            <person name="Madinger C."/>
            <person name="Nove J."/>
            <person name="Anton B."/>
            <person name="Chaudhary K."/>
            <person name="Foster J."/>
            <person name="Holman A."/>
            <person name="Kumar S."/>
            <person name="Lessard P.A."/>
            <person name="Luyten Y.A."/>
            <person name="Slatko B."/>
            <person name="Wood N."/>
            <person name="Wu B."/>
            <person name="Teplitski M."/>
            <person name="Mougous J.D."/>
            <person name="Ward N."/>
            <person name="Eisen J.A."/>
            <person name="Badger J.H."/>
            <person name="Distel D.L."/>
        </authorList>
    </citation>
    <scope>NUCLEOTIDE SEQUENCE [LARGE SCALE GENOMIC DNA]</scope>
    <source>
        <strain>ATCC 39867 / T7901</strain>
    </source>
</reference>
<comment type="function">
    <text evidence="1">Catalyzes oxygen-dependent 5-hydroxyuridine (ho5U) modification at position 34 in tRNAs.</text>
</comment>
<comment type="catalytic activity">
    <reaction evidence="1">
        <text>uridine(34) in tRNA + AH2 + O2 = 5-hydroxyuridine(34) in tRNA + A + H2O</text>
        <dbReference type="Rhea" id="RHEA:64224"/>
        <dbReference type="Rhea" id="RHEA-COMP:11727"/>
        <dbReference type="Rhea" id="RHEA-COMP:13381"/>
        <dbReference type="ChEBI" id="CHEBI:13193"/>
        <dbReference type="ChEBI" id="CHEBI:15377"/>
        <dbReference type="ChEBI" id="CHEBI:15379"/>
        <dbReference type="ChEBI" id="CHEBI:17499"/>
        <dbReference type="ChEBI" id="CHEBI:65315"/>
        <dbReference type="ChEBI" id="CHEBI:136877"/>
    </reaction>
</comment>
<comment type="similarity">
    <text evidence="1">Belongs to the TrhO family.</text>
</comment>
<proteinExistence type="inferred from homology"/>
<keyword id="KW-0560">Oxidoreductase</keyword>
<keyword id="KW-1185">Reference proteome</keyword>
<keyword id="KW-0819">tRNA processing</keyword>
<protein>
    <recommendedName>
        <fullName evidence="1">tRNA uridine(34) hydroxylase</fullName>
        <ecNumber evidence="1">1.14.-.-</ecNumber>
    </recommendedName>
    <alternativeName>
        <fullName evidence="1">tRNA hydroxylation protein O</fullName>
    </alternativeName>
</protein>
<feature type="chain" id="PRO_1000206343" description="tRNA uridine(34) hydroxylase">
    <location>
        <begin position="1"/>
        <end position="321"/>
    </location>
</feature>
<feature type="domain" description="Rhodanese" evidence="1">
    <location>
        <begin position="123"/>
        <end position="217"/>
    </location>
</feature>
<feature type="region of interest" description="Disordered" evidence="2">
    <location>
        <begin position="294"/>
        <end position="321"/>
    </location>
</feature>
<feature type="compositionally biased region" description="Basic and acidic residues" evidence="2">
    <location>
        <begin position="294"/>
        <end position="308"/>
    </location>
</feature>
<feature type="active site" description="Cysteine persulfide intermediate" evidence="1">
    <location>
        <position position="177"/>
    </location>
</feature>
<evidence type="ECO:0000255" key="1">
    <source>
        <dbReference type="HAMAP-Rule" id="MF_00469"/>
    </source>
</evidence>
<evidence type="ECO:0000256" key="2">
    <source>
        <dbReference type="SAM" id="MobiDB-lite"/>
    </source>
</evidence>
<organism>
    <name type="scientific">Teredinibacter turnerae (strain ATCC 39867 / T7901)</name>
    <dbReference type="NCBI Taxonomy" id="377629"/>
    <lineage>
        <taxon>Bacteria</taxon>
        <taxon>Pseudomonadati</taxon>
        <taxon>Pseudomonadota</taxon>
        <taxon>Gammaproteobacteria</taxon>
        <taxon>Cellvibrionales</taxon>
        <taxon>Cellvibrionaceae</taxon>
        <taxon>Teredinibacter</taxon>
    </lineage>
</organism>
<dbReference type="EC" id="1.14.-.-" evidence="1"/>
<dbReference type="EMBL" id="CP001614">
    <property type="protein sequence ID" value="ACR11332.1"/>
    <property type="molecule type" value="Genomic_DNA"/>
</dbReference>
<dbReference type="RefSeq" id="WP_015817444.1">
    <property type="nucleotide sequence ID" value="NC_012997.1"/>
</dbReference>
<dbReference type="SMR" id="C5BMM7"/>
<dbReference type="STRING" id="377629.TERTU_2780"/>
<dbReference type="KEGG" id="ttu:TERTU_2780"/>
<dbReference type="eggNOG" id="COG1054">
    <property type="taxonomic scope" value="Bacteria"/>
</dbReference>
<dbReference type="HOGENOM" id="CLU_038878_0_0_6"/>
<dbReference type="OrthoDB" id="9778326at2"/>
<dbReference type="Proteomes" id="UP000009080">
    <property type="component" value="Chromosome"/>
</dbReference>
<dbReference type="GO" id="GO:0016705">
    <property type="term" value="F:oxidoreductase activity, acting on paired donors, with incorporation or reduction of molecular oxygen"/>
    <property type="evidence" value="ECO:0007669"/>
    <property type="project" value="UniProtKB-UniRule"/>
</dbReference>
<dbReference type="GO" id="GO:0006400">
    <property type="term" value="P:tRNA modification"/>
    <property type="evidence" value="ECO:0007669"/>
    <property type="project" value="UniProtKB-UniRule"/>
</dbReference>
<dbReference type="CDD" id="cd01518">
    <property type="entry name" value="RHOD_YceA"/>
    <property type="match status" value="1"/>
</dbReference>
<dbReference type="Gene3D" id="3.30.70.100">
    <property type="match status" value="1"/>
</dbReference>
<dbReference type="Gene3D" id="3.40.250.10">
    <property type="entry name" value="Rhodanese-like domain"/>
    <property type="match status" value="1"/>
</dbReference>
<dbReference type="HAMAP" id="MF_00469">
    <property type="entry name" value="TrhO"/>
    <property type="match status" value="1"/>
</dbReference>
<dbReference type="InterPro" id="IPR001763">
    <property type="entry name" value="Rhodanese-like_dom"/>
</dbReference>
<dbReference type="InterPro" id="IPR036873">
    <property type="entry name" value="Rhodanese-like_dom_sf"/>
</dbReference>
<dbReference type="InterPro" id="IPR020936">
    <property type="entry name" value="TrhO"/>
</dbReference>
<dbReference type="InterPro" id="IPR040503">
    <property type="entry name" value="TRHO_N"/>
</dbReference>
<dbReference type="NCBIfam" id="NF001136">
    <property type="entry name" value="PRK00142.1-4"/>
    <property type="match status" value="1"/>
</dbReference>
<dbReference type="PANTHER" id="PTHR43268:SF3">
    <property type="entry name" value="RHODANESE-LIKE DOMAIN-CONTAINING PROTEIN 7-RELATED"/>
    <property type="match status" value="1"/>
</dbReference>
<dbReference type="PANTHER" id="PTHR43268">
    <property type="entry name" value="THIOSULFATE SULFURTRANSFERASE/RHODANESE-LIKE DOMAIN-CONTAINING PROTEIN 2"/>
    <property type="match status" value="1"/>
</dbReference>
<dbReference type="Pfam" id="PF00581">
    <property type="entry name" value="Rhodanese"/>
    <property type="match status" value="1"/>
</dbReference>
<dbReference type="Pfam" id="PF17773">
    <property type="entry name" value="UPF0176_N"/>
    <property type="match status" value="1"/>
</dbReference>
<dbReference type="SMART" id="SM00450">
    <property type="entry name" value="RHOD"/>
    <property type="match status" value="1"/>
</dbReference>
<dbReference type="SUPFAM" id="SSF52821">
    <property type="entry name" value="Rhodanese/Cell cycle control phosphatase"/>
    <property type="match status" value="1"/>
</dbReference>
<dbReference type="PROSITE" id="PS50206">
    <property type="entry name" value="RHODANESE_3"/>
    <property type="match status" value="1"/>
</dbReference>
<gene>
    <name evidence="1" type="primary">trhO</name>
    <name type="ordered locus">TERTU_2780</name>
</gene>